<accession>B3GYW2</accession>
<feature type="chain" id="PRO_1000100930" description="ATP-dependent protease ATPase subunit HslU">
    <location>
        <begin position="1"/>
        <end position="440"/>
    </location>
</feature>
<feature type="binding site" evidence="1">
    <location>
        <position position="17"/>
    </location>
    <ligand>
        <name>ATP</name>
        <dbReference type="ChEBI" id="CHEBI:30616"/>
    </ligand>
</feature>
<feature type="binding site" evidence="1">
    <location>
        <begin position="59"/>
        <end position="64"/>
    </location>
    <ligand>
        <name>ATP</name>
        <dbReference type="ChEBI" id="CHEBI:30616"/>
    </ligand>
</feature>
<feature type="binding site" evidence="1">
    <location>
        <position position="253"/>
    </location>
    <ligand>
        <name>ATP</name>
        <dbReference type="ChEBI" id="CHEBI:30616"/>
    </ligand>
</feature>
<feature type="binding site" evidence="1">
    <location>
        <position position="318"/>
    </location>
    <ligand>
        <name>ATP</name>
        <dbReference type="ChEBI" id="CHEBI:30616"/>
    </ligand>
</feature>
<feature type="binding site" evidence="1">
    <location>
        <position position="390"/>
    </location>
    <ligand>
        <name>ATP</name>
        <dbReference type="ChEBI" id="CHEBI:30616"/>
    </ligand>
</feature>
<comment type="function">
    <text evidence="1">ATPase subunit of a proteasome-like degradation complex; this subunit has chaperone activity. The binding of ATP and its subsequent hydrolysis by HslU are essential for unfolding of protein substrates subsequently hydrolyzed by HslV. HslU recognizes the N-terminal part of its protein substrates and unfolds these before they are guided to HslV for hydrolysis.</text>
</comment>
<comment type="subunit">
    <text evidence="1">A double ring-shaped homohexamer of HslV is capped on each side by a ring-shaped HslU homohexamer. The assembly of the HslU/HslV complex is dependent on binding of ATP.</text>
</comment>
<comment type="subcellular location">
    <subcellularLocation>
        <location evidence="1">Cytoplasm</location>
    </subcellularLocation>
</comment>
<comment type="similarity">
    <text evidence="1">Belongs to the ClpX chaperone family. HslU subfamily.</text>
</comment>
<keyword id="KW-0067">ATP-binding</keyword>
<keyword id="KW-0143">Chaperone</keyword>
<keyword id="KW-0963">Cytoplasm</keyword>
<keyword id="KW-0547">Nucleotide-binding</keyword>
<name>HSLU_ACTP7</name>
<gene>
    <name evidence="1" type="primary">hslU</name>
    <name type="ordered locus">APP7_1796</name>
</gene>
<organism>
    <name type="scientific">Actinobacillus pleuropneumoniae serotype 7 (strain AP76)</name>
    <dbReference type="NCBI Taxonomy" id="537457"/>
    <lineage>
        <taxon>Bacteria</taxon>
        <taxon>Pseudomonadati</taxon>
        <taxon>Pseudomonadota</taxon>
        <taxon>Gammaproteobacteria</taxon>
        <taxon>Pasteurellales</taxon>
        <taxon>Pasteurellaceae</taxon>
        <taxon>Actinobacillus</taxon>
    </lineage>
</organism>
<dbReference type="EMBL" id="CP001091">
    <property type="protein sequence ID" value="ACE62448.1"/>
    <property type="molecule type" value="Genomic_DNA"/>
</dbReference>
<dbReference type="RefSeq" id="WP_005620148.1">
    <property type="nucleotide sequence ID" value="NC_010939.1"/>
</dbReference>
<dbReference type="SMR" id="B3GYW2"/>
<dbReference type="GeneID" id="48600025"/>
<dbReference type="KEGG" id="apa:APP7_1796"/>
<dbReference type="HOGENOM" id="CLU_033123_0_0_6"/>
<dbReference type="Proteomes" id="UP000001226">
    <property type="component" value="Chromosome"/>
</dbReference>
<dbReference type="GO" id="GO:0009376">
    <property type="term" value="C:HslUV protease complex"/>
    <property type="evidence" value="ECO:0007669"/>
    <property type="project" value="UniProtKB-UniRule"/>
</dbReference>
<dbReference type="GO" id="GO:0005524">
    <property type="term" value="F:ATP binding"/>
    <property type="evidence" value="ECO:0007669"/>
    <property type="project" value="UniProtKB-UniRule"/>
</dbReference>
<dbReference type="GO" id="GO:0016887">
    <property type="term" value="F:ATP hydrolysis activity"/>
    <property type="evidence" value="ECO:0007669"/>
    <property type="project" value="InterPro"/>
</dbReference>
<dbReference type="GO" id="GO:0008233">
    <property type="term" value="F:peptidase activity"/>
    <property type="evidence" value="ECO:0007669"/>
    <property type="project" value="InterPro"/>
</dbReference>
<dbReference type="GO" id="GO:0036402">
    <property type="term" value="F:proteasome-activating activity"/>
    <property type="evidence" value="ECO:0007669"/>
    <property type="project" value="UniProtKB-UniRule"/>
</dbReference>
<dbReference type="GO" id="GO:0043335">
    <property type="term" value="P:protein unfolding"/>
    <property type="evidence" value="ECO:0007669"/>
    <property type="project" value="UniProtKB-UniRule"/>
</dbReference>
<dbReference type="GO" id="GO:0051603">
    <property type="term" value="P:proteolysis involved in protein catabolic process"/>
    <property type="evidence" value="ECO:0007669"/>
    <property type="project" value="TreeGrafter"/>
</dbReference>
<dbReference type="CDD" id="cd19498">
    <property type="entry name" value="RecA-like_HslU"/>
    <property type="match status" value="1"/>
</dbReference>
<dbReference type="FunFam" id="1.10.8.10:FF:000028">
    <property type="entry name" value="ATP-dependent protease ATPase subunit HslU"/>
    <property type="match status" value="2"/>
</dbReference>
<dbReference type="FunFam" id="1.10.8.60:FF:000027">
    <property type="entry name" value="ATP-dependent protease ATPase subunit HslU"/>
    <property type="match status" value="1"/>
</dbReference>
<dbReference type="FunFam" id="3.40.50.300:FF:000213">
    <property type="entry name" value="ATP-dependent protease ATPase subunit HslU"/>
    <property type="match status" value="1"/>
</dbReference>
<dbReference type="FunFam" id="3.40.50.300:FF:000220">
    <property type="entry name" value="ATP-dependent protease ATPase subunit HslU"/>
    <property type="match status" value="1"/>
</dbReference>
<dbReference type="Gene3D" id="1.10.8.60">
    <property type="match status" value="1"/>
</dbReference>
<dbReference type="Gene3D" id="1.10.8.10">
    <property type="entry name" value="DNA helicase RuvA subunit, C-terminal domain"/>
    <property type="match status" value="1"/>
</dbReference>
<dbReference type="Gene3D" id="3.40.50.300">
    <property type="entry name" value="P-loop containing nucleotide triphosphate hydrolases"/>
    <property type="match status" value="2"/>
</dbReference>
<dbReference type="HAMAP" id="MF_00249">
    <property type="entry name" value="HslU"/>
    <property type="match status" value="1"/>
</dbReference>
<dbReference type="InterPro" id="IPR003593">
    <property type="entry name" value="AAA+_ATPase"/>
</dbReference>
<dbReference type="InterPro" id="IPR050052">
    <property type="entry name" value="ATP-dep_Clp_protease_ClpX"/>
</dbReference>
<dbReference type="InterPro" id="IPR003959">
    <property type="entry name" value="ATPase_AAA_core"/>
</dbReference>
<dbReference type="InterPro" id="IPR019489">
    <property type="entry name" value="Clp_ATPase_C"/>
</dbReference>
<dbReference type="InterPro" id="IPR004491">
    <property type="entry name" value="HslU"/>
</dbReference>
<dbReference type="InterPro" id="IPR027417">
    <property type="entry name" value="P-loop_NTPase"/>
</dbReference>
<dbReference type="NCBIfam" id="TIGR00390">
    <property type="entry name" value="hslU"/>
    <property type="match status" value="1"/>
</dbReference>
<dbReference type="NCBIfam" id="NF003544">
    <property type="entry name" value="PRK05201.1"/>
    <property type="match status" value="1"/>
</dbReference>
<dbReference type="PANTHER" id="PTHR48102">
    <property type="entry name" value="ATP-DEPENDENT CLP PROTEASE ATP-BINDING SUBUNIT CLPX-LIKE, MITOCHONDRIAL-RELATED"/>
    <property type="match status" value="1"/>
</dbReference>
<dbReference type="PANTHER" id="PTHR48102:SF3">
    <property type="entry name" value="ATP-DEPENDENT PROTEASE ATPASE SUBUNIT HSLU"/>
    <property type="match status" value="1"/>
</dbReference>
<dbReference type="Pfam" id="PF00004">
    <property type="entry name" value="AAA"/>
    <property type="match status" value="1"/>
</dbReference>
<dbReference type="Pfam" id="PF07724">
    <property type="entry name" value="AAA_2"/>
    <property type="match status" value="1"/>
</dbReference>
<dbReference type="SMART" id="SM00382">
    <property type="entry name" value="AAA"/>
    <property type="match status" value="1"/>
</dbReference>
<dbReference type="SMART" id="SM01086">
    <property type="entry name" value="ClpB_D2-small"/>
    <property type="match status" value="1"/>
</dbReference>
<dbReference type="SUPFAM" id="SSF52540">
    <property type="entry name" value="P-loop containing nucleoside triphosphate hydrolases"/>
    <property type="match status" value="1"/>
</dbReference>
<proteinExistence type="inferred from homology"/>
<protein>
    <recommendedName>
        <fullName evidence="1">ATP-dependent protease ATPase subunit HslU</fullName>
    </recommendedName>
    <alternativeName>
        <fullName evidence="1">Unfoldase HslU</fullName>
    </alternativeName>
</protein>
<sequence>MSMTPREIVSELDAHIIGQNEAKRAVAIALRNRWRRMQLPEDLRQEVTPKNILMIGPTGVGKTEIARRLAKLANAPFIKVEATKFTEVGYVGKEVDSIIKDLTDVAVKLVKSQAVEKNRMRAQDAAEDRILDVLLPPAKDQWGNVQESDNSSTRQVFRKKLREGQLDDKEIEIDVAAQVSVEIMTPPGMEEMTSQLQSLFEGMSPNKTKKRKMKIKDALKVMVDEEAAKLVNPEELKQQAIEAVEQHGIVFIDEIDKICKKGEHSGGDVSREGVQRDLLPIIEGSTVNTKHGMVKTDHILFICSGAFQVARPSDLLPELQGRLPIRVELKSLTKEDFERILTEPNASLTLQYRELMKTEGVEIEFTKDGISKIAESAFRVNEKTENIGARRLHTVLERLMDGISFDASERSGEKIVIDEKYVQAALNDVVENEDLSRFIL</sequence>
<evidence type="ECO:0000255" key="1">
    <source>
        <dbReference type="HAMAP-Rule" id="MF_00249"/>
    </source>
</evidence>
<reference key="1">
    <citation type="submission" date="2008-06" db="EMBL/GenBank/DDBJ databases">
        <title>Genome and proteome analysis of A. pleuropneumoniae serotype 7.</title>
        <authorList>
            <person name="Linke B."/>
            <person name="Buettner F."/>
            <person name="Martinez-Arias R."/>
            <person name="Goesmann A."/>
            <person name="Baltes N."/>
            <person name="Tegetmeyer H."/>
            <person name="Singh M."/>
            <person name="Gerlach G.F."/>
        </authorList>
    </citation>
    <scope>NUCLEOTIDE SEQUENCE [LARGE SCALE GENOMIC DNA]</scope>
    <source>
        <strain>AP76</strain>
    </source>
</reference>